<organism>
    <name type="scientific">Saccharomyces cerevisiae (strain ATCC 204508 / S288c)</name>
    <name type="common">Baker's yeast</name>
    <dbReference type="NCBI Taxonomy" id="559292"/>
    <lineage>
        <taxon>Eukaryota</taxon>
        <taxon>Fungi</taxon>
        <taxon>Dikarya</taxon>
        <taxon>Ascomycota</taxon>
        <taxon>Saccharomycotina</taxon>
        <taxon>Saccharomycetes</taxon>
        <taxon>Saccharomycetales</taxon>
        <taxon>Saccharomycetaceae</taxon>
        <taxon>Saccharomyces</taxon>
    </lineage>
</organism>
<proteinExistence type="evidence at protein level"/>
<feature type="chain" id="PRO_0000093450" description="Oligomycin resistance ATP-dependent permease YOR1">
    <location>
        <begin position="1"/>
        <end position="1477"/>
    </location>
</feature>
<feature type="topological domain" description="Cytoplasmic" evidence="20">
    <location>
        <begin position="1"/>
        <end position="206"/>
    </location>
</feature>
<feature type="transmembrane region" description="Helical" evidence="3">
    <location>
        <begin position="207"/>
        <end position="227"/>
    </location>
</feature>
<feature type="topological domain" description="Extracellular" evidence="20">
    <location>
        <begin position="228"/>
        <end position="249"/>
    </location>
</feature>
<feature type="transmembrane region" description="Helical" evidence="3">
    <location>
        <begin position="250"/>
        <end position="270"/>
    </location>
</feature>
<feature type="topological domain" description="Cytoplasmic" evidence="20">
    <location>
        <begin position="271"/>
        <end position="328"/>
    </location>
</feature>
<feature type="transmembrane region" description="Helical" evidence="3">
    <location>
        <begin position="329"/>
        <end position="349"/>
    </location>
</feature>
<feature type="topological domain" description="Extracellular" evidence="20">
    <location>
        <begin position="350"/>
        <end position="357"/>
    </location>
</feature>
<feature type="transmembrane region" description="Helical" evidence="3">
    <location>
        <begin position="358"/>
        <end position="370"/>
    </location>
</feature>
<feature type="topological domain" description="Cytoplasmic" evidence="20">
    <location>
        <begin position="371"/>
        <end position="433"/>
    </location>
</feature>
<feature type="transmembrane region" description="Helical" evidence="3">
    <location>
        <begin position="434"/>
        <end position="454"/>
    </location>
</feature>
<feature type="topological domain" description="Extracellular" evidence="20">
    <location>
        <begin position="455"/>
        <end position="478"/>
    </location>
</feature>
<feature type="transmembrane region" description="Helical" evidence="3">
    <location>
        <begin position="479"/>
        <end position="499"/>
    </location>
</feature>
<feature type="topological domain" description="Cytoplasmic" evidence="20">
    <location>
        <begin position="500"/>
        <end position="615"/>
    </location>
</feature>
<feature type="transmembrane region" description="Helical" evidence="3">
    <location>
        <begin position="616"/>
        <end position="636"/>
    </location>
</feature>
<feature type="topological domain" description="Extracellular" evidence="20">
    <location>
        <begin position="637"/>
        <end position="892"/>
    </location>
</feature>
<feature type="transmembrane region" description="Helical" evidence="3">
    <location>
        <begin position="893"/>
        <end position="913"/>
    </location>
</feature>
<feature type="topological domain" description="Cytoplasmic" evidence="20">
    <location>
        <begin position="914"/>
        <end position="940"/>
    </location>
</feature>
<feature type="transmembrane region" description="Helical" evidence="3">
    <location>
        <begin position="941"/>
        <end position="961"/>
    </location>
</feature>
<feature type="topological domain" description="Extracellular" evidence="20">
    <location>
        <begin position="962"/>
        <end position="1027"/>
    </location>
</feature>
<feature type="transmembrane region" description="Helical" evidence="3">
    <location>
        <begin position="1028"/>
        <end position="1048"/>
    </location>
</feature>
<feature type="topological domain" description="Cytoplasmic" evidence="20">
    <location>
        <begin position="1049"/>
        <end position="1117"/>
    </location>
</feature>
<feature type="transmembrane region" description="Helical" evidence="3">
    <location>
        <begin position="1118"/>
        <end position="1138"/>
    </location>
</feature>
<feature type="topological domain" description="Extracellular" evidence="20">
    <location>
        <begin position="1139"/>
        <end position="1141"/>
    </location>
</feature>
<feature type="transmembrane region" description="Helical" evidence="3">
    <location>
        <begin position="1142"/>
        <end position="1162"/>
    </location>
</feature>
<feature type="topological domain" description="Cytoplasmic" evidence="10">
    <location>
        <begin position="1163"/>
        <end position="1477"/>
    </location>
</feature>
<feature type="domain" description="ABC transmembrane type-1 1" evidence="3">
    <location>
        <begin position="207"/>
        <end position="493"/>
    </location>
</feature>
<feature type="domain" description="ABC transporter 1" evidence="2">
    <location>
        <begin position="581"/>
        <end position="808"/>
    </location>
</feature>
<feature type="domain" description="ABC transmembrane type-1 2" evidence="3">
    <location>
        <begin position="897"/>
        <end position="1175"/>
    </location>
</feature>
<feature type="domain" description="ABC transporter 2" evidence="2">
    <location>
        <begin position="1213"/>
        <end position="1464"/>
    </location>
</feature>
<feature type="region of interest" description="Disordered" evidence="4">
    <location>
        <begin position="1"/>
        <end position="48"/>
    </location>
</feature>
<feature type="region of interest" description="Disordered" evidence="4">
    <location>
        <begin position="552"/>
        <end position="595"/>
    </location>
</feature>
<feature type="short sequence motif" description="Diacidic ER export motif DxE" evidence="11">
    <location>
        <begin position="71"/>
        <end position="73"/>
    </location>
</feature>
<feature type="compositionally biased region" description="Basic and acidic residues" evidence="4">
    <location>
        <begin position="36"/>
        <end position="48"/>
    </location>
</feature>
<feature type="compositionally biased region" description="Basic and acidic residues" evidence="4">
    <location>
        <begin position="581"/>
        <end position="595"/>
    </location>
</feature>
<feature type="binding site" evidence="2">
    <location>
        <begin position="621"/>
        <end position="628"/>
    </location>
    <ligand>
        <name>ATP</name>
        <dbReference type="ChEBI" id="CHEBI:30616"/>
        <label>1</label>
    </ligand>
</feature>
<feature type="binding site" evidence="2">
    <location>
        <begin position="1247"/>
        <end position="1254"/>
    </location>
    <ligand>
        <name>ATP</name>
        <dbReference type="ChEBI" id="CHEBI:30616"/>
        <label>2</label>
    </ligand>
</feature>
<feature type="modified residue" description="Phosphoserine" evidence="22">
    <location>
        <position position="10"/>
    </location>
</feature>
<feature type="modified residue" description="Phosphoserine" evidence="24">
    <location>
        <position position="24"/>
    </location>
</feature>
<feature type="modified residue" description="Phosphothreonine" evidence="23">
    <location>
        <position position="53"/>
    </location>
</feature>
<feature type="glycosylation site" description="N-linked (GlcNAc...) asparagine" evidence="1">
    <location>
        <position position="661"/>
    </location>
</feature>
<feature type="glycosylation site" description="N-linked (GlcNAc...) asparagine" evidence="1">
    <location>
        <position position="759"/>
    </location>
</feature>
<feature type="glycosylation site" description="N-linked (GlcNAc...) asparagine" evidence="1">
    <location>
        <position position="799"/>
    </location>
</feature>
<feature type="mutagenesis site" description="Causes the protein to be retained in the endoplasmic reticulum (ER) and degraded via ER-associated degradation." evidence="6">
    <original>D</original>
    <variation>A</variation>
    <location>
        <position position="71"/>
    </location>
</feature>
<feature type="mutagenesis site" description="Causes the protein to be retained in the endoplasmic reticulum (ER) and degraded via ER-associated degradation." evidence="6">
    <original>E</original>
    <variation>A</variation>
    <location>
        <position position="73"/>
    </location>
</feature>
<feature type="mutagenesis site" description="Causes the protein to be retained in the endoplasmic reticulum (ER) and degraded via ER-associated degradation." evidence="5">
    <location>
        <position position="670"/>
    </location>
</feature>
<feature type="mutagenesis site" description="Abolishes ATPase activity." evidence="12">
    <original>E</original>
    <variation>Q</variation>
    <location>
        <position position="1392"/>
    </location>
</feature>
<feature type="mutagenesis site" description="Abolishes ATPase activity." evidence="12">
    <original>H</original>
    <variation>R</variation>
    <location>
        <position position="1423"/>
    </location>
</feature>
<feature type="mutagenesis site" description="Causes partial retention of the protein in the endoplasmic reticulum." evidence="6">
    <original>DFE</original>
    <variation>AFA</variation>
    <location>
        <begin position="1472"/>
        <end position="1474"/>
    </location>
</feature>
<accession>P53049</accession>
<accession>D6VV58</accession>
<protein>
    <recommendedName>
        <fullName evidence="18">Oligomycin resistance ATP-dependent permease YOR1</fullName>
    </recommendedName>
    <alternativeName>
        <fullName>ABC transporter YOR1</fullName>
    </alternativeName>
    <alternativeName>
        <fullName>ABC-type Cd(2+) transporter</fullName>
        <ecNumber evidence="9">7.2.2.2</ecNumber>
    </alternativeName>
    <alternativeName>
        <fullName>ABC-type glutathione-S-conjugate transporter</fullName>
        <ecNumber evidence="9">7.6.2.3</ecNumber>
    </alternativeName>
    <alternativeName>
        <fullName evidence="16">Yeast oligomycin resistance protein 1</fullName>
    </alternativeName>
</protein>
<reference key="1">
    <citation type="journal article" date="1995" name="Mol. Cell. Biol.">
        <title>Expression of an ATP-binding cassette transporter-encoding gene (YOR1) is required for oligomycin resistance in Saccharomyces cerevisiae.</title>
        <authorList>
            <person name="Katzmann D.J."/>
            <person name="Hallstrom T.C."/>
            <person name="Voet M."/>
            <person name="Wysock W."/>
            <person name="Golin J."/>
            <person name="Volckaert G."/>
            <person name="Moye-Rowley W.S."/>
        </authorList>
    </citation>
    <scope>NUCLEOTIDE SEQUENCE [GENOMIC DNA]</scope>
    <scope>FUNCTION</scope>
</reference>
<reference key="2">
    <citation type="journal article" date="1997" name="Yeast">
        <title>Sequence analysis of a near-subtelomeric 35.4 kb DNA segment on the right arm of chromosome VII from Saccharomyces cerevisiae carrying the MAL1 locus reveals 15 complete open reading frames, including ZUO1, BGL2 and BIO2 genes and an ABC transporter gene.</title>
        <authorList>
            <person name="Volckaert G."/>
            <person name="Voet M."/>
            <person name="Robben J."/>
        </authorList>
    </citation>
    <scope>NUCLEOTIDE SEQUENCE [GENOMIC DNA]</scope>
    <source>
        <strain>ATCC 96604 / S288c / FY1679</strain>
    </source>
</reference>
<reference key="3">
    <citation type="journal article" date="1997" name="Nature">
        <title>The nucleotide sequence of Saccharomyces cerevisiae chromosome VII.</title>
        <authorList>
            <person name="Tettelin H."/>
            <person name="Agostoni-Carbone M.L."/>
            <person name="Albermann K."/>
            <person name="Albers M."/>
            <person name="Arroyo J."/>
            <person name="Backes U."/>
            <person name="Barreiros T."/>
            <person name="Bertani I."/>
            <person name="Bjourson A.J."/>
            <person name="Brueckner M."/>
            <person name="Bruschi C.V."/>
            <person name="Carignani G."/>
            <person name="Castagnoli L."/>
            <person name="Cerdan E."/>
            <person name="Clemente M.L."/>
            <person name="Coblenz A."/>
            <person name="Coglievina M."/>
            <person name="Coissac E."/>
            <person name="Defoor E."/>
            <person name="Del Bino S."/>
            <person name="Delius H."/>
            <person name="Delneri D."/>
            <person name="de Wergifosse P."/>
            <person name="Dujon B."/>
            <person name="Durand P."/>
            <person name="Entian K.-D."/>
            <person name="Eraso P."/>
            <person name="Escribano V."/>
            <person name="Fabiani L."/>
            <person name="Fartmann B."/>
            <person name="Feroli F."/>
            <person name="Feuermann M."/>
            <person name="Frontali L."/>
            <person name="Garcia-Gonzalez M."/>
            <person name="Garcia-Saez M.I."/>
            <person name="Goffeau A."/>
            <person name="Guerreiro P."/>
            <person name="Hani J."/>
            <person name="Hansen M."/>
            <person name="Hebling U."/>
            <person name="Hernandez K."/>
            <person name="Heumann K."/>
            <person name="Hilger F."/>
            <person name="Hofmann B."/>
            <person name="Indge K.J."/>
            <person name="James C.M."/>
            <person name="Klima R."/>
            <person name="Koetter P."/>
            <person name="Kramer B."/>
            <person name="Kramer W."/>
            <person name="Lauquin G."/>
            <person name="Leuther H."/>
            <person name="Louis E.J."/>
            <person name="Maillier E."/>
            <person name="Marconi A."/>
            <person name="Martegani E."/>
            <person name="Mazon M.J."/>
            <person name="Mazzoni C."/>
            <person name="McReynolds A.D.K."/>
            <person name="Melchioretto P."/>
            <person name="Mewes H.-W."/>
            <person name="Minenkova O."/>
            <person name="Mueller-Auer S."/>
            <person name="Nawrocki A."/>
            <person name="Netter P."/>
            <person name="Neu R."/>
            <person name="Nombela C."/>
            <person name="Oliver S.G."/>
            <person name="Panzeri L."/>
            <person name="Paoluzi S."/>
            <person name="Plevani P."/>
            <person name="Portetelle D."/>
            <person name="Portillo F."/>
            <person name="Potier S."/>
            <person name="Purnelle B."/>
            <person name="Rieger M."/>
            <person name="Riles L."/>
            <person name="Rinaldi T."/>
            <person name="Robben J."/>
            <person name="Rodrigues-Pousada C."/>
            <person name="Rodriguez-Belmonte E."/>
            <person name="Rodriguez-Torres A.M."/>
            <person name="Rose M."/>
            <person name="Ruzzi M."/>
            <person name="Saliola M."/>
            <person name="Sanchez-Perez M."/>
            <person name="Schaefer B."/>
            <person name="Schaefer M."/>
            <person name="Scharfe M."/>
            <person name="Schmidheini T."/>
            <person name="Schreer A."/>
            <person name="Skala J."/>
            <person name="Souciet J.-L."/>
            <person name="Steensma H.Y."/>
            <person name="Talla E."/>
            <person name="Thierry A."/>
            <person name="Vandenbol M."/>
            <person name="van der Aart Q.J.M."/>
            <person name="Van Dyck L."/>
            <person name="Vanoni M."/>
            <person name="Verhasselt P."/>
            <person name="Voet M."/>
            <person name="Volckaert G."/>
            <person name="Wambutt R."/>
            <person name="Watson M.D."/>
            <person name="Weber N."/>
            <person name="Wedler E."/>
            <person name="Wedler H."/>
            <person name="Wipfli P."/>
            <person name="Wolf K."/>
            <person name="Wright L.F."/>
            <person name="Zaccaria P."/>
            <person name="Zimmermann M."/>
            <person name="Zollner A."/>
            <person name="Kleine K."/>
        </authorList>
    </citation>
    <scope>NUCLEOTIDE SEQUENCE [LARGE SCALE GENOMIC DNA]</scope>
    <source>
        <strain>ATCC 204508 / S288c</strain>
    </source>
</reference>
<reference key="4">
    <citation type="journal article" date="2014" name="G3 (Bethesda)">
        <title>The reference genome sequence of Saccharomyces cerevisiae: Then and now.</title>
        <authorList>
            <person name="Engel S.R."/>
            <person name="Dietrich F.S."/>
            <person name="Fisk D.G."/>
            <person name="Binkley G."/>
            <person name="Balakrishnan R."/>
            <person name="Costanzo M.C."/>
            <person name="Dwight S.S."/>
            <person name="Hitz B.C."/>
            <person name="Karra K."/>
            <person name="Nash R.S."/>
            <person name="Weng S."/>
            <person name="Wong E.D."/>
            <person name="Lloyd P."/>
            <person name="Skrzypek M.S."/>
            <person name="Miyasato S.R."/>
            <person name="Simison M."/>
            <person name="Cherry J.M."/>
        </authorList>
    </citation>
    <scope>GENOME REANNOTATION</scope>
    <source>
        <strain>ATCC 204508 / S288c</strain>
    </source>
</reference>
<reference key="5">
    <citation type="journal article" date="1996" name="J. Biol. Chem.">
        <title>The multidrug resistance-associated protein (MRP) subfamily (Yrs1/Yor1) of Saccharomyces cerevisiae is important for the tolerance to a broad range of organic anions.</title>
        <authorList>
            <person name="Cui Z."/>
            <person name="Hirata D."/>
            <person name="Tsuchiya E."/>
            <person name="Osada H."/>
            <person name="Miyakawa T."/>
        </authorList>
    </citation>
    <scope>FUNCTION</scope>
</reference>
<reference key="6">
    <citation type="journal article" date="1998" name="J. Biol. Chem.">
        <title>ATPase and multidrug transport activities of the overexpressed yeast ABC protein Yor1p.</title>
        <authorList>
            <person name="Decottignies A."/>
            <person name="Grant A.M."/>
            <person name="Nichols J.W."/>
            <person name="de Wet H."/>
            <person name="McIntosh D.B."/>
            <person name="Goffeau A."/>
        </authorList>
    </citation>
    <scope>FUNCTION</scope>
    <scope>CATALYTIC ACTIVITY</scope>
    <scope>SUBCELLULAR LOCATION</scope>
</reference>
<reference key="7">
    <citation type="journal article" date="1999" name="Mol. Cell. Biol.">
        <title>Mutational disruption of plasma membrane trafficking of Saccharomyces cerevisiae Yor1p, a homologue of mammalian multidrug resistance protein.</title>
        <authorList>
            <person name="Katzmann D.J."/>
            <person name="Epping E.A."/>
            <person name="Moye-Rowley W.S."/>
        </authorList>
    </citation>
    <scope>FUNCTION</scope>
    <scope>SUBCELLULAR LOCATION</scope>
    <scope>MUTAGENESIS OF PHE-670</scope>
</reference>
<reference key="8">
    <citation type="journal article" date="2002" name="J. Biol. Chem.">
        <title>Identification of interdependent signals required for anterograde traffic of the ATP-binding cassette transporter protein Yor1p.</title>
        <authorList>
            <person name="Epping E.A."/>
            <person name="Moye-Rowley W.S."/>
        </authorList>
    </citation>
    <scope>SUBCELLULAR LOCATION</scope>
    <scope>MUTAGENESIS OF ASP-71; GLU-73 AND 1472-ASP--GLU-1474</scope>
</reference>
<reference key="9">
    <citation type="journal article" date="2003" name="J. Biol. Chem.">
        <title>A general strategy to uncover transcription factor properties identifies a new regulator of drug resistance in yeast.</title>
        <authorList>
            <person name="Hikkel I."/>
            <person name="Lucau-Danila A."/>
            <person name="Delaveau T."/>
            <person name="Marc P."/>
            <person name="Devaux F."/>
            <person name="Jacq C."/>
        </authorList>
    </citation>
    <scope>INDUCTION</scope>
</reference>
<reference key="10">
    <citation type="journal article" date="2003" name="Nature">
        <title>Global analysis of protein expression in yeast.</title>
        <authorList>
            <person name="Ghaemmaghami S."/>
            <person name="Huh W.-K."/>
            <person name="Bower K."/>
            <person name="Howson R.W."/>
            <person name="Belle A."/>
            <person name="Dephoure N."/>
            <person name="O'Shea E.K."/>
            <person name="Weissman J.S."/>
        </authorList>
    </citation>
    <scope>LEVEL OF PROTEIN EXPRESSION [LARGE SCALE ANALYSIS]</scope>
</reference>
<reference key="11">
    <citation type="journal article" date="2005" name="Mol. Cell. Proteomics">
        <title>Quantitative phosphoproteomics applied to the yeast pheromone signaling pathway.</title>
        <authorList>
            <person name="Gruhler A."/>
            <person name="Olsen J.V."/>
            <person name="Mohammed S."/>
            <person name="Mortensen P."/>
            <person name="Faergeman N.J."/>
            <person name="Mann M."/>
            <person name="Jensen O.N."/>
        </authorList>
    </citation>
    <scope>PHOSPHORYLATION [LARGE SCALE ANALYSIS] AT SER-10</scope>
    <scope>IDENTIFICATION BY MASS SPECTROMETRY [LARGE SCALE ANALYSIS]</scope>
    <source>
        <strain>YAL6B</strain>
    </source>
</reference>
<reference key="12">
    <citation type="journal article" date="2006" name="Biochimie">
        <title>Role of the yeast ABC transporter Yor1p in cadmium detoxification.</title>
        <authorList>
            <person name="Nagy Z."/>
            <person name="Montigny C."/>
            <person name="Leverrier P."/>
            <person name="Yeh S."/>
            <person name="Goffeau A."/>
            <person name="Garrigos M."/>
            <person name="Falson P."/>
        </authorList>
    </citation>
    <scope>FUNCTION</scope>
    <scope>CATALYTIC ACTIVITY</scope>
</reference>
<reference key="13">
    <citation type="journal article" date="2006" name="Proc. Natl. Acad. Sci. U.S.A.">
        <title>A global topology map of the Saccharomyces cerevisiae membrane proteome.</title>
        <authorList>
            <person name="Kim H."/>
            <person name="Melen K."/>
            <person name="Oesterberg M."/>
            <person name="von Heijne G."/>
        </authorList>
    </citation>
    <scope>TOPOLOGY [LARGE SCALE ANALYSIS]</scope>
    <source>
        <strain>ATCC 208353 / W303-1A</strain>
    </source>
</reference>
<reference key="14">
    <citation type="journal article" date="2007" name="J. Proteome Res.">
        <title>Large-scale phosphorylation analysis of alpha-factor-arrested Saccharomyces cerevisiae.</title>
        <authorList>
            <person name="Li X."/>
            <person name="Gerber S.A."/>
            <person name="Rudner A.D."/>
            <person name="Beausoleil S.A."/>
            <person name="Haas W."/>
            <person name="Villen J."/>
            <person name="Elias J.E."/>
            <person name="Gygi S.P."/>
        </authorList>
    </citation>
    <scope>PHOSPHORYLATION [LARGE SCALE ANALYSIS] AT SER-24</scope>
    <scope>IDENTIFICATION BY MASS SPECTROMETRY [LARGE SCALE ANALYSIS]</scope>
    <source>
        <strain>ADR376</strain>
    </source>
</reference>
<reference key="15">
    <citation type="journal article" date="2007" name="Mol. Biol. Cell">
        <title>Inhibiting endoplasmic reticulum (ER)-associated degradation of misfolded Yor1p does not permit ER export despite the presence of a diacidic sorting signal.</title>
        <authorList>
            <person name="Pagant S."/>
            <person name="Kung L."/>
            <person name="Dorrington M."/>
            <person name="Lee M.C."/>
            <person name="Miller E.A."/>
        </authorList>
    </citation>
    <scope>DOMAIN</scope>
</reference>
<reference key="16">
    <citation type="journal article" date="2007" name="Proc. Natl. Acad. Sci. U.S.A.">
        <title>Analysis of phosphorylation sites on proteins from Saccharomyces cerevisiae by electron transfer dissociation (ETD) mass spectrometry.</title>
        <authorList>
            <person name="Chi A."/>
            <person name="Huttenhower C."/>
            <person name="Geer L.Y."/>
            <person name="Coon J.J."/>
            <person name="Syka J.E.P."/>
            <person name="Bai D.L."/>
            <person name="Shabanowitz J."/>
            <person name="Burke D.J."/>
            <person name="Troyanskaya O.G."/>
            <person name="Hunt D.F."/>
        </authorList>
    </citation>
    <scope>PHOSPHORYLATION [LARGE SCALE ANALYSIS] AT THR-53</scope>
    <scope>IDENTIFICATION BY MASS SPECTROMETRY [LARGE SCALE ANALYSIS]</scope>
</reference>
<reference key="17">
    <citation type="journal article" date="2008" name="Biochim. Biophys. Acta">
        <title>Functional characterization of the Saccharomyces cerevisiae ABC-transporter Yor1p overexpressed in plasma membranes.</title>
        <authorList>
            <person name="Grigoras I."/>
            <person name="Lazard M."/>
            <person name="Plateau P."/>
            <person name="Blanquet S."/>
        </authorList>
    </citation>
    <scope>FUNCTION</scope>
    <scope>BIOPHYSICOCHEMICAL PROPERTIES</scope>
    <scope>MUTAGENESIS OF GLU-1392 AND HIS-1423</scope>
</reference>
<reference key="18">
    <citation type="journal article" date="2008" name="Mol. Cell. Proteomics">
        <title>A multidimensional chromatography technology for in-depth phosphoproteome analysis.</title>
        <authorList>
            <person name="Albuquerque C.P."/>
            <person name="Smolka M.B."/>
            <person name="Payne S.H."/>
            <person name="Bafna V."/>
            <person name="Eng J."/>
            <person name="Zhou H."/>
        </authorList>
    </citation>
    <scope>IDENTIFICATION BY MASS SPECTROMETRY [LARGE SCALE ANALYSIS]</scope>
</reference>
<sequence length="1477" mass="166728">MTITVGDAVSETELENKSQNVVLSPKASASSDISTDVDKDTSSSWDDKSLLPTGEYIVDRNKPQTYLNSDDIEKVTESDIFPQKRLFSFLHSKKIPEVPQTDDERKIYPLFHTNIISNMFFWWVLPILRVGYKRTIQPNDLFKMDPRMSIETLYDDFEKNMIYYFEKTRKKYRKRHPEATEEEVMENAKLPKHTVLRALLFTFKKQYFMSIVFAILANCTSGFNPMITKRLIEFVEEKAIFHSMHVNKGIGYAIGACLMMFVNGLTFNHFFHTSQLTGVQAKSILTKAAMKKMFNASNYARHCFPNGKVTSFVTTDLARIEFALSFQPFLAGFPAILAICIVLLIVNLGPIALVGIGIFFGGFFISLFAFKLILGFRIAANIFTDARVTMMREVLNNIKMIKYYTWEDAYEKNIQDIRTKEISKVRKMQLSRNFLIAMAMSLPSIASLVTFLAMYKVNKGGRQPGNIFASLSLFQVLSLQMFFLPIAIGTGIDMIIGLGRLQSLLEAPEDDPNQMIEMKPSPGFDPKLALKMTHCSFEWEDYELNDAIEEAKGEAKDEGKKNKKKRKDTWGKPSASTNKAKRLDNMLKDRDGPEDLEKTSFRGFKDLNFDIKKGEFIMITGPIGTGKSSLLNAMAGSMRKTDGKVEVNGDLLMCGYPWIQNASVRDNIIFGSPFNKEKYDEVVRVCSLKADLDILPAGDMTEIGERGITLSGGQKARINLARSVYKKKDIYLFDDVLSAVDSRVGKHIMDECLTGMLANKTRILATHQLSLIERASRVIVLGTDGQVDIGTVDELKARNQTLINLLQFSSQNSEKEDEEQEAVVAGELGQLKYESEVKELTELKKKATEMSQTANSGKIVADGHTSSKEERAVNSISLKIYREYIKAAVGKWGFIALPLYAILVVGTTFCSLFSSVWLSYWTENKFKNRPPSFYMGLYSFFVFAAFIFMNGQFTILCAMGIMASKWLNLRAVKRILHTPMSYIDTTPLGRILNRFTKDTDSLDNELTESLRLMTSQFANIVGVCVMCIVYLPWFAIAIPFLLVIFVLIADHYQSSGREIKRLEAVQRSFVYNNLNEVLGGMDTIKAYRSQERFLAKSDFLINKMNEAGYLVVVLQRWVGIFLDMVAIAFALIITLLCVTRAFPISAASVGVLLTYVLQLPGLLNTILRAMTQTENDMNSAERLVTYATELPLEASYRKPEMTPPESWPSMGEIIFENVDFAYRPGLPIVLKNLNLNIKSGEKIGICGRTGAGKSTIMSALYRLNELTAGKILIDNVDISQLGLFDLRRKLAIIPQDPVLFRGTIRKNLDPFNERTDDELWDALVRGGAIAKDDLPEVKLQKPDENGTHGKMHKFHLDQAVEEEGSNFSLGERQLLALTRALVRQSKILILDEATSSVDYETDGKIQTRIVEEFGDCTILCIAHRLKTIVNYDRILVLEKGEVAEFDTPWTLFSQEDSIFRSMCSRSGIVENDFENRS</sequence>
<name>YOR1_YEAST</name>
<comment type="function">
    <text evidence="5 9 12 13 14 15">Functions as a pleiotropic drug pump at the plasma membrane to clear toxic substances from the cytosol. Organic anion transporter involved in the detoxification of a wide range of toxic environmental organic anions that contain carboxyl groups (PubMed:8663018). Required for tolerance to reveromycin A, tautomycin and leptomycin B (PubMed:8663018). Required for oligomycin resistance (PubMed:10082567, PubMed:8524254). Required for rhodamine B resistance. Mediates the ATP-dependent efflux of rhodamine B (PubMed:9575223). Involved in cadmium detoxification. Displays an energy-dependent efflux of cadmium and glutathione, suggesting that YOR1 transports both compounds as a bis-glutathionato-cadmium Cd-(GS)(2) complex (PubMed:16814918). Confers resistance to rhodamine 6G and to doxorubicin (PubMed:17950691).</text>
</comment>
<comment type="catalytic activity">
    <reaction evidence="15">
        <text>a 1,2-diacyl-sn-glycero-3-phosphoethanolamine(in) + ATP + H2O = a 1,2-diacyl-sn-glycero-3-phosphoethanolamine(out) + ADP + phosphate + H(+)</text>
        <dbReference type="Rhea" id="RHEA:36439"/>
        <dbReference type="ChEBI" id="CHEBI:15377"/>
        <dbReference type="ChEBI" id="CHEBI:15378"/>
        <dbReference type="ChEBI" id="CHEBI:30616"/>
        <dbReference type="ChEBI" id="CHEBI:43474"/>
        <dbReference type="ChEBI" id="CHEBI:64612"/>
        <dbReference type="ChEBI" id="CHEBI:456216"/>
    </reaction>
    <physiologicalReaction direction="right-to-left" evidence="21">
        <dbReference type="Rhea" id="RHEA:36441"/>
    </physiologicalReaction>
</comment>
<comment type="catalytic activity">
    <reaction evidence="9">
        <text>Cd(2+)(in) + ATP + H2O = Cd(2+)(out) + ADP + phosphate + H(+)</text>
        <dbReference type="Rhea" id="RHEA:12132"/>
        <dbReference type="ChEBI" id="CHEBI:15377"/>
        <dbReference type="ChEBI" id="CHEBI:15378"/>
        <dbReference type="ChEBI" id="CHEBI:30616"/>
        <dbReference type="ChEBI" id="CHEBI:43474"/>
        <dbReference type="ChEBI" id="CHEBI:48775"/>
        <dbReference type="ChEBI" id="CHEBI:456216"/>
        <dbReference type="EC" id="7.2.2.2"/>
    </reaction>
    <physiologicalReaction direction="left-to-right" evidence="19">
        <dbReference type="Rhea" id="RHEA:12133"/>
    </physiologicalReaction>
</comment>
<comment type="catalytic activity">
    <reaction evidence="9">
        <text>an S-substituted glutathione(in) + ATP + H2O = an S-substituted glutathione(out) + ADP + phosphate + H(+)</text>
        <dbReference type="Rhea" id="RHEA:19121"/>
        <dbReference type="ChEBI" id="CHEBI:15377"/>
        <dbReference type="ChEBI" id="CHEBI:15378"/>
        <dbReference type="ChEBI" id="CHEBI:30616"/>
        <dbReference type="ChEBI" id="CHEBI:43474"/>
        <dbReference type="ChEBI" id="CHEBI:90779"/>
        <dbReference type="ChEBI" id="CHEBI:456216"/>
        <dbReference type="EC" id="7.6.2.3"/>
    </reaction>
    <physiologicalReaction direction="left-to-right" evidence="19">
        <dbReference type="Rhea" id="RHEA:19122"/>
    </physiologicalReaction>
</comment>
<comment type="biophysicochemical properties">
    <kinetics>
        <KM evidence="12">50 uM for ATP</KM>
        <Vmax evidence="12">290.0 nmol/min/mg enzyme</Vmax>
    </kinetics>
</comment>
<comment type="interaction">
    <interactant intactId="EBI-29324">
        <id>P53049</id>
    </interactant>
    <interactant intactId="EBI-27427">
        <id>Q04322</id>
        <label>GYL1</label>
    </interactant>
    <organismsDiffer>false</organismsDiffer>
    <experiments>2</experiments>
</comment>
<comment type="subcellular location">
    <subcellularLocation>
        <location evidence="5 6 15">Cell membrane</location>
        <topology evidence="1">Multi-pass membrane protein</topology>
    </subcellularLocation>
</comment>
<comment type="induction">
    <text evidence="7">Transcriptionally regulated by PDR8.</text>
</comment>
<comment type="miscellaneous">
    <text evidence="8">Present with 3610 molecules/cell in log phase SD medium.</text>
</comment>
<comment type="similarity">
    <text evidence="18">Belongs to the ABC transporter superfamily. ABCC family. Conjugate transporter (TC 3.A.1.208) subfamily.</text>
</comment>
<keyword id="KW-0067">ATP-binding</keyword>
<keyword id="KW-1003">Cell membrane</keyword>
<keyword id="KW-0325">Glycoprotein</keyword>
<keyword id="KW-0472">Membrane</keyword>
<keyword id="KW-0547">Nucleotide-binding</keyword>
<keyword id="KW-0597">Phosphoprotein</keyword>
<keyword id="KW-1185">Reference proteome</keyword>
<keyword id="KW-0677">Repeat</keyword>
<keyword id="KW-1278">Translocase</keyword>
<keyword id="KW-0812">Transmembrane</keyword>
<keyword id="KW-1133">Transmembrane helix</keyword>
<keyword id="KW-0813">Transport</keyword>
<evidence type="ECO:0000255" key="1"/>
<evidence type="ECO:0000255" key="2">
    <source>
        <dbReference type="PROSITE-ProRule" id="PRU00434"/>
    </source>
</evidence>
<evidence type="ECO:0000255" key="3">
    <source>
        <dbReference type="PROSITE-ProRule" id="PRU00441"/>
    </source>
</evidence>
<evidence type="ECO:0000256" key="4">
    <source>
        <dbReference type="SAM" id="MobiDB-lite"/>
    </source>
</evidence>
<evidence type="ECO:0000269" key="5">
    <source>
    </source>
</evidence>
<evidence type="ECO:0000269" key="6">
    <source>
    </source>
</evidence>
<evidence type="ECO:0000269" key="7">
    <source>
    </source>
</evidence>
<evidence type="ECO:0000269" key="8">
    <source>
    </source>
</evidence>
<evidence type="ECO:0000269" key="9">
    <source>
    </source>
</evidence>
<evidence type="ECO:0000269" key="10">
    <source>
    </source>
</evidence>
<evidence type="ECO:0000269" key="11">
    <source>
    </source>
</evidence>
<evidence type="ECO:0000269" key="12">
    <source>
    </source>
</evidence>
<evidence type="ECO:0000269" key="13">
    <source>
    </source>
</evidence>
<evidence type="ECO:0000269" key="14">
    <source>
    </source>
</evidence>
<evidence type="ECO:0000269" key="15">
    <source>
    </source>
</evidence>
<evidence type="ECO:0000303" key="16">
    <source>
    </source>
</evidence>
<evidence type="ECO:0000303" key="17">
    <source>
    </source>
</evidence>
<evidence type="ECO:0000305" key="18"/>
<evidence type="ECO:0000305" key="19">
    <source>
    </source>
</evidence>
<evidence type="ECO:0000305" key="20">
    <source>
    </source>
</evidence>
<evidence type="ECO:0000305" key="21">
    <source>
    </source>
</evidence>
<evidence type="ECO:0007744" key="22">
    <source>
    </source>
</evidence>
<evidence type="ECO:0007744" key="23">
    <source>
    </source>
</evidence>
<evidence type="ECO:0007744" key="24">
    <source>
    </source>
</evidence>
<dbReference type="EC" id="7.2.2.2" evidence="9"/>
<dbReference type="EC" id="7.6.2.3" evidence="9"/>
<dbReference type="EMBL" id="Z73066">
    <property type="protein sequence ID" value="CAA97312.1"/>
    <property type="molecule type" value="Genomic_DNA"/>
</dbReference>
<dbReference type="EMBL" id="BK006941">
    <property type="protein sequence ID" value="DAA08369.1"/>
    <property type="molecule type" value="Genomic_DNA"/>
</dbReference>
<dbReference type="PIR" id="S64616">
    <property type="entry name" value="S64616"/>
</dbReference>
<dbReference type="RefSeq" id="NP_011797.3">
    <property type="nucleotide sequence ID" value="NM_001181410.3"/>
</dbReference>
<dbReference type="SMR" id="P53049"/>
<dbReference type="BioGRID" id="33531">
    <property type="interactions" value="497"/>
</dbReference>
<dbReference type="DIP" id="DIP-6796N"/>
<dbReference type="FunCoup" id="P53049">
    <property type="interactions" value="335"/>
</dbReference>
<dbReference type="IntAct" id="P53049">
    <property type="interactions" value="62"/>
</dbReference>
<dbReference type="MINT" id="P53049"/>
<dbReference type="STRING" id="4932.YGR281W"/>
<dbReference type="SwissLipids" id="SLP:000000522"/>
<dbReference type="TCDB" id="3.A.1.208.3">
    <property type="family name" value="the atp-binding cassette (abc) superfamily"/>
</dbReference>
<dbReference type="GlyCosmos" id="P53049">
    <property type="glycosylation" value="3 sites, No reported glycans"/>
</dbReference>
<dbReference type="GlyGen" id="P53049">
    <property type="glycosylation" value="3 sites"/>
</dbReference>
<dbReference type="iPTMnet" id="P53049"/>
<dbReference type="PaxDb" id="4932-YGR281W"/>
<dbReference type="PeptideAtlas" id="P53049"/>
<dbReference type="EnsemblFungi" id="YGR281W_mRNA">
    <property type="protein sequence ID" value="YGR281W"/>
    <property type="gene ID" value="YGR281W"/>
</dbReference>
<dbReference type="GeneID" id="853198"/>
<dbReference type="KEGG" id="sce:YGR281W"/>
<dbReference type="AGR" id="SGD:S000003513"/>
<dbReference type="SGD" id="S000003513">
    <property type="gene designation" value="YOR1"/>
</dbReference>
<dbReference type="VEuPathDB" id="FungiDB:YGR281W"/>
<dbReference type="eggNOG" id="KOG0054">
    <property type="taxonomic scope" value="Eukaryota"/>
</dbReference>
<dbReference type="HOGENOM" id="CLU_000604_27_1_1"/>
<dbReference type="InParanoid" id="P53049"/>
<dbReference type="OMA" id="QVTDAWT"/>
<dbReference type="OrthoDB" id="6500128at2759"/>
<dbReference type="BioCyc" id="YEAST:G3O-30944-MONOMER"/>
<dbReference type="Reactome" id="R-SCE-159418">
    <property type="pathway name" value="Recycling of bile acids and salts"/>
</dbReference>
<dbReference type="Reactome" id="R-SCE-1660661">
    <property type="pathway name" value="Sphingolipid de novo biosynthesis"/>
</dbReference>
<dbReference type="Reactome" id="R-SCE-189483">
    <property type="pathway name" value="Heme degradation"/>
</dbReference>
<dbReference type="Reactome" id="R-SCE-2142691">
    <property type="pathway name" value="Synthesis of Leukotrienes (LT) and Eoxins (EX)"/>
</dbReference>
<dbReference type="Reactome" id="R-SCE-382556">
    <property type="pathway name" value="ABC-family proteins mediated transport"/>
</dbReference>
<dbReference type="Reactome" id="R-SCE-9707564">
    <property type="pathway name" value="Cytoprotection by HMOX1"/>
</dbReference>
<dbReference type="Reactome" id="R-SCE-9749641">
    <property type="pathway name" value="Aspirin ADME"/>
</dbReference>
<dbReference type="Reactome" id="R-SCE-9753281">
    <property type="pathway name" value="Paracetamol ADME"/>
</dbReference>
<dbReference type="Reactome" id="R-SCE-9754706">
    <property type="pathway name" value="Atorvastatin ADME"/>
</dbReference>
<dbReference type="Reactome" id="R-SCE-9758890">
    <property type="pathway name" value="Transport of RCbl within the body"/>
</dbReference>
<dbReference type="BioGRID-ORCS" id="853198">
    <property type="hits" value="0 hits in 10 CRISPR screens"/>
</dbReference>
<dbReference type="PRO" id="PR:P53049"/>
<dbReference type="Proteomes" id="UP000002311">
    <property type="component" value="Chromosome VII"/>
</dbReference>
<dbReference type="RNAct" id="P53049">
    <property type="molecule type" value="protein"/>
</dbReference>
<dbReference type="GO" id="GO:0071944">
    <property type="term" value="C:cell periphery"/>
    <property type="evidence" value="ECO:0007005"/>
    <property type="project" value="SGD"/>
</dbReference>
<dbReference type="GO" id="GO:0005886">
    <property type="term" value="C:plasma membrane"/>
    <property type="evidence" value="ECO:0000314"/>
    <property type="project" value="SGD"/>
</dbReference>
<dbReference type="GO" id="GO:0015434">
    <property type="term" value="F:ABC-type cadmium transporter activity"/>
    <property type="evidence" value="ECO:0007669"/>
    <property type="project" value="UniProtKB-EC"/>
</dbReference>
<dbReference type="GO" id="GO:0015431">
    <property type="term" value="F:ABC-type glutathione S-conjugate transporter activity"/>
    <property type="evidence" value="ECO:0007669"/>
    <property type="project" value="UniProtKB-EC"/>
</dbReference>
<dbReference type="GO" id="GO:0008559">
    <property type="term" value="F:ABC-type xenobiotic transporter activity"/>
    <property type="evidence" value="ECO:0000314"/>
    <property type="project" value="SGD"/>
</dbReference>
<dbReference type="GO" id="GO:0005524">
    <property type="term" value="F:ATP binding"/>
    <property type="evidence" value="ECO:0007669"/>
    <property type="project" value="UniProtKB-KW"/>
</dbReference>
<dbReference type="GO" id="GO:0016887">
    <property type="term" value="F:ATP hydrolysis activity"/>
    <property type="evidence" value="ECO:0007669"/>
    <property type="project" value="InterPro"/>
</dbReference>
<dbReference type="GO" id="GO:0055085">
    <property type="term" value="P:transmembrane transport"/>
    <property type="evidence" value="ECO:0000318"/>
    <property type="project" value="GO_Central"/>
</dbReference>
<dbReference type="GO" id="GO:0042908">
    <property type="term" value="P:xenobiotic transport"/>
    <property type="evidence" value="ECO:0000314"/>
    <property type="project" value="SGD"/>
</dbReference>
<dbReference type="CDD" id="cd18597">
    <property type="entry name" value="ABC_6TM_YOR1_D1_like"/>
    <property type="match status" value="1"/>
</dbReference>
<dbReference type="CDD" id="cd18606">
    <property type="entry name" value="ABC_6TM_YOR1_D2_like"/>
    <property type="match status" value="1"/>
</dbReference>
<dbReference type="CDD" id="cd03250">
    <property type="entry name" value="ABCC_MRP_domain1"/>
    <property type="match status" value="1"/>
</dbReference>
<dbReference type="CDD" id="cd03244">
    <property type="entry name" value="ABCC_MRP_domain2"/>
    <property type="match status" value="1"/>
</dbReference>
<dbReference type="FunFam" id="3.40.50.300:FF:000565">
    <property type="entry name" value="ABC bile acid transporter"/>
    <property type="match status" value="1"/>
</dbReference>
<dbReference type="FunFam" id="3.40.50.300:FF:001750">
    <property type="entry name" value="ATP-binding cassette transporter"/>
    <property type="match status" value="1"/>
</dbReference>
<dbReference type="FunFam" id="1.20.1560.10:FF:000010">
    <property type="entry name" value="Multidrug resistance-associated ABC transporter"/>
    <property type="match status" value="1"/>
</dbReference>
<dbReference type="FunFam" id="1.20.1560.10:FF:000189">
    <property type="entry name" value="Multidrug transporter"/>
    <property type="match status" value="1"/>
</dbReference>
<dbReference type="Gene3D" id="1.20.1560.10">
    <property type="entry name" value="ABC transporter type 1, transmembrane domain"/>
    <property type="match status" value="2"/>
</dbReference>
<dbReference type="Gene3D" id="3.40.50.300">
    <property type="entry name" value="P-loop containing nucleotide triphosphate hydrolases"/>
    <property type="match status" value="2"/>
</dbReference>
<dbReference type="InterPro" id="IPR003593">
    <property type="entry name" value="AAA+_ATPase"/>
</dbReference>
<dbReference type="InterPro" id="IPR011527">
    <property type="entry name" value="ABC1_TM_dom"/>
</dbReference>
<dbReference type="InterPro" id="IPR036640">
    <property type="entry name" value="ABC1_TM_sf"/>
</dbReference>
<dbReference type="InterPro" id="IPR003439">
    <property type="entry name" value="ABC_transporter-like_ATP-bd"/>
</dbReference>
<dbReference type="InterPro" id="IPR017871">
    <property type="entry name" value="ABC_transporter-like_CS"/>
</dbReference>
<dbReference type="InterPro" id="IPR050173">
    <property type="entry name" value="ABC_transporter_C-like"/>
</dbReference>
<dbReference type="InterPro" id="IPR027417">
    <property type="entry name" value="P-loop_NTPase"/>
</dbReference>
<dbReference type="PANTHER" id="PTHR24223">
    <property type="entry name" value="ATP-BINDING CASSETTE SUB-FAMILY C"/>
    <property type="match status" value="1"/>
</dbReference>
<dbReference type="PANTHER" id="PTHR24223:SF456">
    <property type="entry name" value="MULTIDRUG RESISTANCE-ASSOCIATED PROTEIN LETHAL(2)03659"/>
    <property type="match status" value="1"/>
</dbReference>
<dbReference type="Pfam" id="PF00664">
    <property type="entry name" value="ABC_membrane"/>
    <property type="match status" value="2"/>
</dbReference>
<dbReference type="Pfam" id="PF00005">
    <property type="entry name" value="ABC_tran"/>
    <property type="match status" value="2"/>
</dbReference>
<dbReference type="SMART" id="SM00382">
    <property type="entry name" value="AAA"/>
    <property type="match status" value="2"/>
</dbReference>
<dbReference type="SUPFAM" id="SSF90123">
    <property type="entry name" value="ABC transporter transmembrane region"/>
    <property type="match status" value="2"/>
</dbReference>
<dbReference type="SUPFAM" id="SSF52540">
    <property type="entry name" value="P-loop containing nucleoside triphosphate hydrolases"/>
    <property type="match status" value="2"/>
</dbReference>
<dbReference type="PROSITE" id="PS50929">
    <property type="entry name" value="ABC_TM1F"/>
    <property type="match status" value="2"/>
</dbReference>
<dbReference type="PROSITE" id="PS00211">
    <property type="entry name" value="ABC_TRANSPORTER_1"/>
    <property type="match status" value="1"/>
</dbReference>
<dbReference type="PROSITE" id="PS50893">
    <property type="entry name" value="ABC_TRANSPORTER_2"/>
    <property type="match status" value="2"/>
</dbReference>
<gene>
    <name evidence="16" type="primary">YOR1</name>
    <name evidence="17" type="synonym">YRS1</name>
    <name type="ordered locus">YGR281W</name>
</gene>